<feature type="signal peptide" evidence="1">
    <location>
        <begin position="1"/>
        <end position="27"/>
    </location>
</feature>
<feature type="propeptide" id="PRO_0000453055" evidence="5">
    <location>
        <begin position="28"/>
        <end position="35"/>
    </location>
</feature>
<feature type="peptide" id="PRO_0000453056" description="U6-myrmicitoxin-Mri1a" evidence="2">
    <location>
        <begin position="36"/>
        <end position="49"/>
    </location>
</feature>
<sequence>MNPKALCSFLLATFLLLTVTIMPSVHANAEANADAIIGPCPKKPIGIVC</sequence>
<name>TX06A_MANRB</name>
<proteinExistence type="evidence at protein level"/>
<protein>
    <recommendedName>
        <fullName evidence="3">U6-myrmicitoxin-Mri1a</fullName>
        <shortName evidence="3">U6-MYRTX-Mri1a</shortName>
    </recommendedName>
</protein>
<keyword id="KW-0903">Direct protein sequencing</keyword>
<keyword id="KW-1015">Disulfide bond</keyword>
<keyword id="KW-0964">Secreted</keyword>
<keyword id="KW-0732">Signal</keyword>
<organism evidence="6">
    <name type="scientific">Manica rubida</name>
    <name type="common">European giant red ant</name>
    <dbReference type="NCBI Taxonomy" id="219785"/>
    <lineage>
        <taxon>Eukaryota</taxon>
        <taxon>Metazoa</taxon>
        <taxon>Ecdysozoa</taxon>
        <taxon>Arthropoda</taxon>
        <taxon>Hexapoda</taxon>
        <taxon>Insecta</taxon>
        <taxon>Pterygota</taxon>
        <taxon>Neoptera</taxon>
        <taxon>Endopterygota</taxon>
        <taxon>Hymenoptera</taxon>
        <taxon>Apocrita</taxon>
        <taxon>Aculeata</taxon>
        <taxon>Formicoidea</taxon>
        <taxon>Formicidae</taxon>
        <taxon>Myrmicinae</taxon>
        <taxon>Manica</taxon>
    </lineage>
</organism>
<evidence type="ECO:0000255" key="1"/>
<evidence type="ECO:0000269" key="2">
    <source>
    </source>
</evidence>
<evidence type="ECO:0000303" key="3">
    <source>
    </source>
</evidence>
<evidence type="ECO:0000305" key="4"/>
<evidence type="ECO:0000305" key="5">
    <source>
    </source>
</evidence>
<evidence type="ECO:0000312" key="6">
    <source>
        <dbReference type="EMBL" id="QIQ51450.1"/>
    </source>
</evidence>
<reference evidence="6" key="1">
    <citation type="journal article" date="2020" name="J. Proteome Res.">
        <title>Venom Peptide Repertoire of the European Myrmicine Ant Manica rubida: Identification of Insecticidal Toxins.</title>
        <authorList>
            <person name="Touchard A."/>
            <person name="Aili S.R."/>
            <person name="Tene N."/>
            <person name="Barasse V."/>
            <person name="Klopp C."/>
            <person name="Dejean A."/>
            <person name="Kini R.M."/>
            <person name="Mrinalini X."/>
            <person name="Coquet L."/>
            <person name="Jouenne T."/>
            <person name="Lefranc B."/>
            <person name="Leprince J."/>
            <person name="Escoubas P."/>
            <person name="Nicholson G.M."/>
            <person name="Treilhou M."/>
            <person name="Bonnafe E."/>
        </authorList>
    </citation>
    <scope>NUCLEOTIDE SEQUENCE [MRNA]</scope>
    <scope>PROTEIN SEQUENCE OF 36-49</scope>
    <scope>FUNCTION</scope>
    <scope>SUBCELLULAR LOCATION</scope>
    <scope>TISSUE SPECIFICITY</scope>
    <scope>MASS SPECTROMETRY</scope>
    <scope>DISULFIDE BOND</scope>
    <source>
        <tissue evidence="6">Venom gland</tissue>
    </source>
</reference>
<comment type="subcellular location">
    <subcellularLocation>
        <location evidence="2">Secreted</location>
    </subcellularLocation>
</comment>
<comment type="tissue specificity">
    <text evidence="2">Expressed by the venom gland.</text>
</comment>
<comment type="PTM">
    <text evidence="2">Contains 1 disulfide bond.</text>
</comment>
<comment type="mass spectrometry"/>
<comment type="similarity">
    <text evidence="4">Belongs to the formicidae venom precursor-01 superfamily.</text>
</comment>
<dbReference type="EMBL" id="MN765040">
    <property type="protein sequence ID" value="QIQ51450.1"/>
    <property type="molecule type" value="mRNA"/>
</dbReference>
<dbReference type="GO" id="GO:0005576">
    <property type="term" value="C:extracellular region"/>
    <property type="evidence" value="ECO:0000314"/>
    <property type="project" value="UniProtKB"/>
</dbReference>
<accession>A0A6G9KHD1</accession>